<comment type="similarity">
    <text evidence="1">Belongs to the RemA family.</text>
</comment>
<accession>B5YF50</accession>
<sequence length="85" mass="9254">MKLVNIGFGNMVVSSRIVAIISPDSAPIKRFLSDAKTRNELIDATYGRKTRAVLVLDSGHIVLSALHPETIAARIEGGDKEEESY</sequence>
<protein>
    <recommendedName>
        <fullName evidence="1">Putative regulatory protein DICTH_1339</fullName>
    </recommendedName>
</protein>
<name>Y1339_DICT6</name>
<feature type="chain" id="PRO_0000373786" description="Putative regulatory protein DICTH_1339">
    <location>
        <begin position="1"/>
        <end position="85"/>
    </location>
</feature>
<evidence type="ECO:0000255" key="1">
    <source>
        <dbReference type="HAMAP-Rule" id="MF_01503"/>
    </source>
</evidence>
<organism>
    <name type="scientific">Dictyoglomus thermophilum (strain ATCC 35947 / DSM 3960 / H-6-12)</name>
    <dbReference type="NCBI Taxonomy" id="309799"/>
    <lineage>
        <taxon>Bacteria</taxon>
        <taxon>Pseudomonadati</taxon>
        <taxon>Dictyoglomota</taxon>
        <taxon>Dictyoglomia</taxon>
        <taxon>Dictyoglomales</taxon>
        <taxon>Dictyoglomaceae</taxon>
        <taxon>Dictyoglomus</taxon>
    </lineage>
</organism>
<gene>
    <name type="ordered locus">DICTH_1339</name>
</gene>
<dbReference type="EMBL" id="CP001146">
    <property type="protein sequence ID" value="ACI18490.1"/>
    <property type="molecule type" value="Genomic_DNA"/>
</dbReference>
<dbReference type="RefSeq" id="WP_012547122.1">
    <property type="nucleotide sequence ID" value="NC_011297.1"/>
</dbReference>
<dbReference type="SMR" id="B5YF50"/>
<dbReference type="STRING" id="309799.DICTH_1339"/>
<dbReference type="PaxDb" id="309799-DICTH_1339"/>
<dbReference type="KEGG" id="dth:DICTH_1339"/>
<dbReference type="eggNOG" id="COG2052">
    <property type="taxonomic scope" value="Bacteria"/>
</dbReference>
<dbReference type="HOGENOM" id="CLU_165326_0_0_0"/>
<dbReference type="OrthoDB" id="5432174at2"/>
<dbReference type="Proteomes" id="UP000001733">
    <property type="component" value="Chromosome"/>
</dbReference>
<dbReference type="HAMAP" id="MF_01503">
    <property type="entry name" value="RemA"/>
    <property type="match status" value="1"/>
</dbReference>
<dbReference type="InterPro" id="IPR007169">
    <property type="entry name" value="RemA-like"/>
</dbReference>
<dbReference type="NCBIfam" id="NF003315">
    <property type="entry name" value="PRK04323.1"/>
    <property type="match status" value="1"/>
</dbReference>
<dbReference type="PANTHER" id="PTHR38449:SF1">
    <property type="entry name" value="REGULATORY PROTEIN SSL2874-RELATED"/>
    <property type="match status" value="1"/>
</dbReference>
<dbReference type="PANTHER" id="PTHR38449">
    <property type="entry name" value="REGULATORY PROTEIN TM_1690-RELATED"/>
    <property type="match status" value="1"/>
</dbReference>
<dbReference type="Pfam" id="PF04025">
    <property type="entry name" value="RemA-like"/>
    <property type="match status" value="1"/>
</dbReference>
<proteinExistence type="inferred from homology"/>
<reference key="1">
    <citation type="journal article" date="2014" name="Genome Announc.">
        <title>Complete Genome Sequence of the Extreme Thermophile Dictyoglomus thermophilum H-6-12.</title>
        <authorList>
            <person name="Coil D.A."/>
            <person name="Badger J.H."/>
            <person name="Forberger H.C."/>
            <person name="Riggs F."/>
            <person name="Madupu R."/>
            <person name="Fedorova N."/>
            <person name="Ward N."/>
            <person name="Robb F.T."/>
            <person name="Eisen J.A."/>
        </authorList>
    </citation>
    <scope>NUCLEOTIDE SEQUENCE [LARGE SCALE GENOMIC DNA]</scope>
    <source>
        <strain>ATCC 35947 / DSM 3960 / H-6-12</strain>
    </source>
</reference>